<accession>P07917</accession>
<feature type="chain" id="PRO_0000046512" description="DNA polymerase catalytic subunit">
    <location>
        <begin position="1"/>
        <end position="1235"/>
    </location>
</feature>
<feature type="region of interest" description="Disordered" evidence="2">
    <location>
        <begin position="640"/>
        <end position="692"/>
    </location>
</feature>
<feature type="region of interest" description="Disordered" evidence="2">
    <location>
        <begin position="1098"/>
        <end position="1134"/>
    </location>
</feature>
<feature type="compositionally biased region" description="Basic and acidic residues" evidence="2">
    <location>
        <begin position="650"/>
        <end position="661"/>
    </location>
</feature>
<feature type="compositionally biased region" description="Acidic residues" evidence="2">
    <location>
        <begin position="662"/>
        <end position="675"/>
    </location>
</feature>
<feature type="compositionally biased region" description="Basic and acidic residues" evidence="2">
    <location>
        <begin position="676"/>
        <end position="691"/>
    </location>
</feature>
<feature type="helix" evidence="4">
    <location>
        <begin position="1201"/>
        <end position="1208"/>
    </location>
</feature>
<feature type="strand" evidence="4">
    <location>
        <begin position="1212"/>
        <end position="1215"/>
    </location>
</feature>
<feature type="helix" evidence="4">
    <location>
        <begin position="1220"/>
        <end position="1234"/>
    </location>
</feature>
<sequence>MFSGGGGPLSPGGKSAARAASGFFVPAGPRGAGRGPPPCLRQNFYNPYLAPVGTQQKPTGPTQRHTYYSECDEFRFIAPRVLDEDAPPEKRAGVHDGHLKRAPKVYCGGDERDVLRVGSGGFWPRRSRLWGGVDHAPAGFNPTVTVFHVYDILENVEHAYGMRAAQFHARFMDAITPTGTVITLLGLTPEGHRVAVHVYGTRQYFYMNKEEVDRHLQCRAPRDLCERMAAALRESPGASFRGISADHFEAEVVERTDVYYYETRPALFYRVYVRSGRVLSYLCDNFCPAIKKYEGGVDATTRFILDNPGFVTFGWYRLKPGRNNTLAQPRVPMAFGTSSDVEFNCTADNLAIEGGMSDLPAYKLMCFDIECKAGGEDELAFPVAGHPEDLVIQISCLLYDLSTTALEHVLLFSLGSCDLPESHLTELAARGLPTPVVLEFDSEFEMLLAFMTLVKQYGPEFVTGYNIINFDWPFLLAKLTDIYKVPLDGYGRMNGRGVFRVWDIGQSHFQKRSKIKVNGMVNIDMYGIITDKIKLSSYKLNAVAEAVLKDKKKDLSYRDIPAYYAAGPAQRGVIGEYCIQDSLLVGQLFFKFLPHLELSAVARLAGINITRTIYDGQQIRVFTCLLRLADQKGFILPDTQGRFRGAGGEAPKRPAAAREDEERPEEEGEDEDEREEGGGEREPEGARETAGRHVGYQGARVLDPTSGFHVNPVVVFDFASLYPSIIQAHNLCFSTLSLRADAVAHLEAGKDYLEIEVGGRRLFFVKAHVRESLLSILLRDWLAMRKQIRSRIPQSSPEEAVLLDKQQAAIKVVCNSVYGFTGVQHGLLPCLHVAATVTTIGREMLLATREYVHARWAAFEQLLADFPEAADMRAPGPYSMRIIYGDTDSIFVLCRGLTAAGLTAVGDKMASHISRALFLPPIKLECEKTFTKLLLIAKKKYIGVIYGGKMLIKGVDLVRKNNCAFINRTSRALVDLLFYDDTVSGAAAALAERPAEEWLARPLPEGLQAFGAVLVDAHRRITDPERDIQDFVLTAELSRHPRAYTNKRLAHLTVYYKLMARRAQVPSIKDRIPYVIVAQTREVEETVARLAALRELDATAPGDEPAPPAALPCPAKRPRETPSHADPPGGASKPRKLLVSELAEDPAYAIAHGVALNTDYYFSHLLGVACVTFKALFGNNAKITESLLKRFIPEVWHPPDDVAARLRAAGFGAVGAGATAEETRRMLHRAFDTLA</sequence>
<protein>
    <recommendedName>
        <fullName>DNA polymerase catalytic subunit</fullName>
        <ecNumber>2.7.7.7</ecNumber>
        <ecNumber>3.1.26.4</ecNumber>
    </recommendedName>
</protein>
<dbReference type="EC" id="2.7.7.7"/>
<dbReference type="EC" id="3.1.26.4"/>
<dbReference type="EMBL" id="X04495">
    <property type="protein sequence ID" value="CAA28183.1"/>
    <property type="molecule type" value="Genomic_DNA"/>
</dbReference>
<dbReference type="PIR" id="A25552">
    <property type="entry name" value="DJBEAN"/>
</dbReference>
<dbReference type="PDB" id="1DML">
    <property type="method" value="X-ray"/>
    <property type="resolution" value="2.70 A"/>
    <property type="chains" value="B/D/F/H=1200-1235"/>
</dbReference>
<dbReference type="PDBsum" id="1DML"/>
<dbReference type="SMR" id="P07917"/>
<dbReference type="IntAct" id="P07917">
    <property type="interactions" value="1"/>
</dbReference>
<dbReference type="EvolutionaryTrace" id="P07917"/>
<dbReference type="GO" id="GO:0042025">
    <property type="term" value="C:host cell nucleus"/>
    <property type="evidence" value="ECO:0007669"/>
    <property type="project" value="UniProtKB-SubCell"/>
</dbReference>
<dbReference type="GO" id="GO:0003677">
    <property type="term" value="F:DNA binding"/>
    <property type="evidence" value="ECO:0007669"/>
    <property type="project" value="UniProtKB-KW"/>
</dbReference>
<dbReference type="GO" id="GO:0003887">
    <property type="term" value="F:DNA-directed DNA polymerase activity"/>
    <property type="evidence" value="ECO:0007669"/>
    <property type="project" value="UniProtKB-KW"/>
</dbReference>
<dbReference type="GO" id="GO:0000166">
    <property type="term" value="F:nucleotide binding"/>
    <property type="evidence" value="ECO:0007669"/>
    <property type="project" value="InterPro"/>
</dbReference>
<dbReference type="GO" id="GO:0004523">
    <property type="term" value="F:RNA-DNA hybrid ribonuclease activity"/>
    <property type="evidence" value="ECO:0007669"/>
    <property type="project" value="UniProtKB-EC"/>
</dbReference>
<dbReference type="GO" id="GO:0006261">
    <property type="term" value="P:DNA-templated DNA replication"/>
    <property type="evidence" value="ECO:0007669"/>
    <property type="project" value="TreeGrafter"/>
</dbReference>
<dbReference type="GO" id="GO:0039693">
    <property type="term" value="P:viral DNA genome replication"/>
    <property type="evidence" value="ECO:0007669"/>
    <property type="project" value="UniProtKB-KW"/>
</dbReference>
<dbReference type="FunFam" id="1.10.287.690:FF:000006">
    <property type="entry name" value="DNA polymerase"/>
    <property type="match status" value="1"/>
</dbReference>
<dbReference type="FunFam" id="3.30.342.10:FF:000013">
    <property type="entry name" value="DNA polymerase"/>
    <property type="match status" value="1"/>
</dbReference>
<dbReference type="FunFam" id="3.30.420.10:FF:000004">
    <property type="entry name" value="DNA polymerase"/>
    <property type="match status" value="1"/>
</dbReference>
<dbReference type="FunFam" id="1.10.132.60:FF:000011">
    <property type="entry name" value="DNA polymerase catalytic subunit"/>
    <property type="match status" value="1"/>
</dbReference>
<dbReference type="Gene3D" id="1.10.132.60">
    <property type="entry name" value="DNA polymerase family B, C-terminal domain"/>
    <property type="match status" value="1"/>
</dbReference>
<dbReference type="Gene3D" id="3.30.342.10">
    <property type="entry name" value="DNA Polymerase, chain B, domain 1"/>
    <property type="match status" value="1"/>
</dbReference>
<dbReference type="Gene3D" id="1.10.287.690">
    <property type="entry name" value="Helix hairpin bin"/>
    <property type="match status" value="1"/>
</dbReference>
<dbReference type="Gene3D" id="3.90.1600.10">
    <property type="entry name" value="Palm domain of DNA polymerase"/>
    <property type="match status" value="1"/>
</dbReference>
<dbReference type="Gene3D" id="3.30.420.10">
    <property type="entry name" value="Ribonuclease H-like superfamily/Ribonuclease H"/>
    <property type="match status" value="1"/>
</dbReference>
<dbReference type="InterPro" id="IPR006172">
    <property type="entry name" value="DNA-dir_DNA_pol_B"/>
</dbReference>
<dbReference type="InterPro" id="IPR017964">
    <property type="entry name" value="DNA-dir_DNA_pol_B_CS"/>
</dbReference>
<dbReference type="InterPro" id="IPR006133">
    <property type="entry name" value="DNA-dir_DNA_pol_B_exonuc"/>
</dbReference>
<dbReference type="InterPro" id="IPR006134">
    <property type="entry name" value="DNA-dir_DNA_pol_B_multi_dom"/>
</dbReference>
<dbReference type="InterPro" id="IPR043502">
    <property type="entry name" value="DNA/RNA_pol_sf"/>
</dbReference>
<dbReference type="InterPro" id="IPR042087">
    <property type="entry name" value="DNA_pol_B_thumb"/>
</dbReference>
<dbReference type="InterPro" id="IPR023211">
    <property type="entry name" value="DNA_pol_palm_dom_sf"/>
</dbReference>
<dbReference type="InterPro" id="IPR050240">
    <property type="entry name" value="DNA_pol_type-B"/>
</dbReference>
<dbReference type="InterPro" id="IPR021639">
    <property type="entry name" value="DNAPolymera_Pol_C"/>
</dbReference>
<dbReference type="InterPro" id="IPR012337">
    <property type="entry name" value="RNaseH-like_sf"/>
</dbReference>
<dbReference type="InterPro" id="IPR036397">
    <property type="entry name" value="RNaseH_sf"/>
</dbReference>
<dbReference type="PANTHER" id="PTHR10322">
    <property type="entry name" value="DNA POLYMERASE CATALYTIC SUBUNIT"/>
    <property type="match status" value="1"/>
</dbReference>
<dbReference type="PANTHER" id="PTHR10322:SF23">
    <property type="entry name" value="DNA POLYMERASE DELTA CATALYTIC SUBUNIT"/>
    <property type="match status" value="1"/>
</dbReference>
<dbReference type="Pfam" id="PF00136">
    <property type="entry name" value="DNA_pol_B"/>
    <property type="match status" value="1"/>
</dbReference>
<dbReference type="Pfam" id="PF03104">
    <property type="entry name" value="DNA_pol_B_exo1"/>
    <property type="match status" value="1"/>
</dbReference>
<dbReference type="Pfam" id="PF11590">
    <property type="entry name" value="DNAPolymera_Pol"/>
    <property type="match status" value="1"/>
</dbReference>
<dbReference type="PRINTS" id="PR00106">
    <property type="entry name" value="DNAPOLB"/>
</dbReference>
<dbReference type="SMART" id="SM00486">
    <property type="entry name" value="POLBc"/>
    <property type="match status" value="1"/>
</dbReference>
<dbReference type="SUPFAM" id="SSF56672">
    <property type="entry name" value="DNA/RNA polymerases"/>
    <property type="match status" value="1"/>
</dbReference>
<dbReference type="SUPFAM" id="SSF53098">
    <property type="entry name" value="Ribonuclease H-like"/>
    <property type="match status" value="1"/>
</dbReference>
<dbReference type="PROSITE" id="PS00116">
    <property type="entry name" value="DNA_POLYMERASE_B"/>
    <property type="match status" value="1"/>
</dbReference>
<evidence type="ECO:0000250" key="1"/>
<evidence type="ECO:0000256" key="2">
    <source>
        <dbReference type="SAM" id="MobiDB-lite"/>
    </source>
</evidence>
<evidence type="ECO:0000305" key="3"/>
<evidence type="ECO:0007829" key="4">
    <source>
        <dbReference type="PDB" id="1DML"/>
    </source>
</evidence>
<organism>
    <name type="scientific">Human herpesvirus 1 (strain Angelotti)</name>
    <name type="common">HHV-1</name>
    <name type="synonym">Human herpes simplex virus 1</name>
    <dbReference type="NCBI Taxonomy" id="10301"/>
    <lineage>
        <taxon>Viruses</taxon>
        <taxon>Duplodnaviria</taxon>
        <taxon>Heunggongvirae</taxon>
        <taxon>Peploviricota</taxon>
        <taxon>Herviviricetes</taxon>
        <taxon>Herpesvirales</taxon>
        <taxon>Orthoherpesviridae</taxon>
        <taxon>Alphaherpesvirinae</taxon>
        <taxon>Simplexvirus</taxon>
        <taxon>Simplexvirus humanalpha1</taxon>
        <taxon>Human herpesvirus 1</taxon>
    </lineage>
</organism>
<comment type="function">
    <text evidence="1">Replicates viral genomic DNA. The replication complex is composed of six viral proteins: the DNA polymerase, processivity factor, primase, primase-associated factor, helicase, and ssDNA-binding protein. Additionally, the polymerase contains an intrinsic ribonuclease H (RNase H) activity that specifically degrades RNA/DNA heteroduplexes or duplex DNA substrates in the 5' to 3' direction. Therefore, it can catalyze the excision of the RNA primers that initiate the synthesis of Okazaki fragments at a replication fork during viral DNA replication (By similarity).</text>
</comment>
<comment type="catalytic activity">
    <reaction>
        <text>DNA(n) + a 2'-deoxyribonucleoside 5'-triphosphate = DNA(n+1) + diphosphate</text>
        <dbReference type="Rhea" id="RHEA:22508"/>
        <dbReference type="Rhea" id="RHEA-COMP:17339"/>
        <dbReference type="Rhea" id="RHEA-COMP:17340"/>
        <dbReference type="ChEBI" id="CHEBI:33019"/>
        <dbReference type="ChEBI" id="CHEBI:61560"/>
        <dbReference type="ChEBI" id="CHEBI:173112"/>
        <dbReference type="EC" id="2.7.7.7"/>
    </reaction>
</comment>
<comment type="catalytic activity">
    <reaction>
        <text>Endonucleolytic cleavage to 5'-phosphomonoester.</text>
        <dbReference type="EC" id="3.1.26.4"/>
    </reaction>
</comment>
<comment type="subunit">
    <text evidence="1">Forms a complex with the ssDNA-binding protein UL29, the DNA polymerase processivity factor, and the alkaline exonuclease. Interacts with the putative helicase-primase complex subunit UL8; this interaction may coordinate leading and lagging strand DNA synthesis at the replication fork (By similarity).</text>
</comment>
<comment type="subcellular location">
    <subcellularLocation>
        <location evidence="3">Host nucleus</location>
    </subcellularLocation>
    <text evidence="1">The protein is present at discrete sites in nuclei, called replication compartments where viral DNA replication occurs.</text>
</comment>
<comment type="similarity">
    <text evidence="3">Belongs to the DNA polymerase type-B family.</text>
</comment>
<organismHost>
    <name type="scientific">Homo sapiens</name>
    <name type="common">Human</name>
    <dbReference type="NCBI Taxonomy" id="9606"/>
</organismHost>
<reference key="1">
    <citation type="journal article" date="1986" name="Nucleic Acids Res.">
        <title>Nucleotide sequence of the DNA polymerase gene of herpes simplex virus type 1 strain Angelotti.</title>
        <authorList>
            <person name="Knopf C.W."/>
        </authorList>
    </citation>
    <scope>NUCLEOTIDE SEQUENCE [GENOMIC DNA]</scope>
</reference>
<reference key="2">
    <citation type="journal article" date="2004" name="Proteins">
        <title>The extended left-handed helix: a simple nucleic acid-binding motif.</title>
        <authorList>
            <person name="Hicks J.M."/>
            <person name="Hsu V.L."/>
        </authorList>
    </citation>
    <scope>X-RAY CRYSTALLOGRAPHY (2.7 ANGSTROMS) OF 1200-1235</scope>
</reference>
<keyword id="KW-0002">3D-structure</keyword>
<keyword id="KW-0235">DNA replication</keyword>
<keyword id="KW-0238">DNA-binding</keyword>
<keyword id="KW-0239">DNA-directed DNA polymerase</keyword>
<keyword id="KW-0255">Endonuclease</keyword>
<keyword id="KW-1048">Host nucleus</keyword>
<keyword id="KW-0378">Hydrolase</keyword>
<keyword id="KW-0511">Multifunctional enzyme</keyword>
<keyword id="KW-0540">Nuclease</keyword>
<keyword id="KW-0548">Nucleotidyltransferase</keyword>
<keyword id="KW-0808">Transferase</keyword>
<keyword id="KW-1194">Viral DNA replication</keyword>
<name>DPOL_HHV1A</name>
<proteinExistence type="evidence at protein level"/>
<gene>
    <name type="ORF">UL30</name>
</gene>